<feature type="chain" id="PRO_1000085675" description="Cyclic pyranopterin monophosphate synthase">
    <location>
        <begin position="1"/>
        <end position="160"/>
    </location>
</feature>
<feature type="active site" evidence="1">
    <location>
        <position position="127"/>
    </location>
</feature>
<feature type="binding site" evidence="1">
    <location>
        <begin position="74"/>
        <end position="76"/>
    </location>
    <ligand>
        <name>substrate</name>
    </ligand>
</feature>
<feature type="binding site" evidence="1">
    <location>
        <begin position="112"/>
        <end position="113"/>
    </location>
    <ligand>
        <name>substrate</name>
    </ligand>
</feature>
<evidence type="ECO:0000255" key="1">
    <source>
        <dbReference type="HAMAP-Rule" id="MF_01224"/>
    </source>
</evidence>
<comment type="function">
    <text evidence="1">Catalyzes the conversion of (8S)-3',8-cyclo-7,8-dihydroguanosine 5'-triphosphate to cyclic pyranopterin monophosphate (cPMP).</text>
</comment>
<comment type="catalytic activity">
    <reaction evidence="1">
        <text>(8S)-3',8-cyclo-7,8-dihydroguanosine 5'-triphosphate = cyclic pyranopterin phosphate + diphosphate</text>
        <dbReference type="Rhea" id="RHEA:49580"/>
        <dbReference type="ChEBI" id="CHEBI:33019"/>
        <dbReference type="ChEBI" id="CHEBI:59648"/>
        <dbReference type="ChEBI" id="CHEBI:131766"/>
        <dbReference type="EC" id="4.6.1.17"/>
    </reaction>
</comment>
<comment type="pathway">
    <text evidence="1">Cofactor biosynthesis; molybdopterin biosynthesis.</text>
</comment>
<comment type="subunit">
    <text evidence="1">Homohexamer; trimer of dimers.</text>
</comment>
<comment type="similarity">
    <text evidence="1">Belongs to the MoaC family.</text>
</comment>
<organism>
    <name type="scientific">Geotalea uraniireducens (strain Rf4)</name>
    <name type="common">Geobacter uraniireducens</name>
    <dbReference type="NCBI Taxonomy" id="351605"/>
    <lineage>
        <taxon>Bacteria</taxon>
        <taxon>Pseudomonadati</taxon>
        <taxon>Thermodesulfobacteriota</taxon>
        <taxon>Desulfuromonadia</taxon>
        <taxon>Geobacterales</taxon>
        <taxon>Geobacteraceae</taxon>
        <taxon>Geotalea</taxon>
    </lineage>
</organism>
<sequence length="160" mass="17165">MSFNHFDEQGQAIMVDVSGKEPTLRTARAQAVVRLRPETLQAILDGRMTKGDVLGVARLAGIAAAKKTPELIPLSHPLAIHHAAVEFATDPETGEIAVTATVRAFERTGVEMEAMVSASVAALTVYDMCKGSDKGITIGQVALLYKEGGKSGVYRREEER</sequence>
<gene>
    <name evidence="1" type="primary">moaC</name>
    <name type="ordered locus">Gura_3540</name>
</gene>
<dbReference type="EC" id="4.6.1.17" evidence="1"/>
<dbReference type="EMBL" id="CP000698">
    <property type="protein sequence ID" value="ABQ27695.1"/>
    <property type="molecule type" value="Genomic_DNA"/>
</dbReference>
<dbReference type="RefSeq" id="WP_011940354.1">
    <property type="nucleotide sequence ID" value="NC_009483.1"/>
</dbReference>
<dbReference type="SMR" id="A5G7C7"/>
<dbReference type="STRING" id="351605.Gura_3540"/>
<dbReference type="KEGG" id="gur:Gura_3540"/>
<dbReference type="HOGENOM" id="CLU_074693_1_0_7"/>
<dbReference type="OrthoDB" id="9794429at2"/>
<dbReference type="UniPathway" id="UPA00344"/>
<dbReference type="Proteomes" id="UP000006695">
    <property type="component" value="Chromosome"/>
</dbReference>
<dbReference type="GO" id="GO:0061799">
    <property type="term" value="F:cyclic pyranopterin monophosphate synthase activity"/>
    <property type="evidence" value="ECO:0007669"/>
    <property type="project" value="UniProtKB-UniRule"/>
</dbReference>
<dbReference type="GO" id="GO:0006777">
    <property type="term" value="P:Mo-molybdopterin cofactor biosynthetic process"/>
    <property type="evidence" value="ECO:0007669"/>
    <property type="project" value="UniProtKB-UniRule"/>
</dbReference>
<dbReference type="CDD" id="cd01420">
    <property type="entry name" value="MoaC_PE"/>
    <property type="match status" value="1"/>
</dbReference>
<dbReference type="Gene3D" id="3.30.70.640">
    <property type="entry name" value="Molybdopterin cofactor biosynthesis C (MoaC) domain"/>
    <property type="match status" value="1"/>
</dbReference>
<dbReference type="HAMAP" id="MF_01224_B">
    <property type="entry name" value="MoaC_B"/>
    <property type="match status" value="1"/>
</dbReference>
<dbReference type="InterPro" id="IPR023045">
    <property type="entry name" value="MoaC"/>
</dbReference>
<dbReference type="InterPro" id="IPR047594">
    <property type="entry name" value="MoaC_bact/euk"/>
</dbReference>
<dbReference type="InterPro" id="IPR036522">
    <property type="entry name" value="MoaC_sf"/>
</dbReference>
<dbReference type="InterPro" id="IPR050105">
    <property type="entry name" value="MoCo_biosynth_MoaA/MoaC"/>
</dbReference>
<dbReference type="InterPro" id="IPR002820">
    <property type="entry name" value="Mopterin_CF_biosynth-C_dom"/>
</dbReference>
<dbReference type="NCBIfam" id="TIGR00581">
    <property type="entry name" value="moaC"/>
    <property type="match status" value="1"/>
</dbReference>
<dbReference type="NCBIfam" id="NF006870">
    <property type="entry name" value="PRK09364.1"/>
    <property type="match status" value="1"/>
</dbReference>
<dbReference type="PANTHER" id="PTHR22960:SF29">
    <property type="entry name" value="CYCLIC PYRANOPTERIN MONOPHOSPHATE SYNTHASE"/>
    <property type="match status" value="1"/>
</dbReference>
<dbReference type="PANTHER" id="PTHR22960">
    <property type="entry name" value="MOLYBDOPTERIN COFACTOR SYNTHESIS PROTEIN A"/>
    <property type="match status" value="1"/>
</dbReference>
<dbReference type="Pfam" id="PF01967">
    <property type="entry name" value="MoaC"/>
    <property type="match status" value="1"/>
</dbReference>
<dbReference type="SUPFAM" id="SSF55040">
    <property type="entry name" value="Molybdenum cofactor biosynthesis protein C, MoaC"/>
    <property type="match status" value="1"/>
</dbReference>
<keyword id="KW-0456">Lyase</keyword>
<keyword id="KW-0501">Molybdenum cofactor biosynthesis</keyword>
<keyword id="KW-1185">Reference proteome</keyword>
<protein>
    <recommendedName>
        <fullName evidence="1">Cyclic pyranopterin monophosphate synthase</fullName>
        <ecNumber evidence="1">4.6.1.17</ecNumber>
    </recommendedName>
    <alternativeName>
        <fullName evidence="1">Molybdenum cofactor biosynthesis protein C</fullName>
    </alternativeName>
</protein>
<name>MOAC_GEOUR</name>
<accession>A5G7C7</accession>
<proteinExistence type="inferred from homology"/>
<reference key="1">
    <citation type="submission" date="2007-05" db="EMBL/GenBank/DDBJ databases">
        <title>Complete sequence of Geobacter uraniireducens Rf4.</title>
        <authorList>
            <consortium name="US DOE Joint Genome Institute"/>
            <person name="Copeland A."/>
            <person name="Lucas S."/>
            <person name="Lapidus A."/>
            <person name="Barry K."/>
            <person name="Detter J.C."/>
            <person name="Glavina del Rio T."/>
            <person name="Hammon N."/>
            <person name="Israni S."/>
            <person name="Dalin E."/>
            <person name="Tice H."/>
            <person name="Pitluck S."/>
            <person name="Chertkov O."/>
            <person name="Brettin T."/>
            <person name="Bruce D."/>
            <person name="Han C."/>
            <person name="Schmutz J."/>
            <person name="Larimer F."/>
            <person name="Land M."/>
            <person name="Hauser L."/>
            <person name="Kyrpides N."/>
            <person name="Mikhailova N."/>
            <person name="Shelobolina E."/>
            <person name="Aklujkar M."/>
            <person name="Lovley D."/>
            <person name="Richardson P."/>
        </authorList>
    </citation>
    <scope>NUCLEOTIDE SEQUENCE [LARGE SCALE GENOMIC DNA]</scope>
    <source>
        <strain>ATCC BAA-1134 / JCM 13001 / Rf4</strain>
    </source>
</reference>